<evidence type="ECO:0000255" key="1">
    <source>
        <dbReference type="HAMAP-Rule" id="MF_01198"/>
    </source>
</evidence>
<sequence length="86" mass="9923">MKNLIAELLFKLAQKEEESKELCAQVEALEIIVTAMLRNMAQNDQQRVIDQVEGALYEVKPDASIPDDDTELLRDYVKKLLKHPRQ</sequence>
<protein>
    <recommendedName>
        <fullName evidence="1">Anti-adapter protein IraP</fullName>
    </recommendedName>
</protein>
<keyword id="KW-0175">Coiled coil</keyword>
<keyword id="KW-0963">Cytoplasm</keyword>
<keyword id="KW-0346">Stress response</keyword>
<feature type="chain" id="PRO_1000138487" description="Anti-adapter protein IraP">
    <location>
        <begin position="1"/>
        <end position="86"/>
    </location>
</feature>
<feature type="coiled-coil region" evidence="1">
    <location>
        <begin position="1"/>
        <end position="36"/>
    </location>
</feature>
<accession>B6HZI2</accession>
<gene>
    <name evidence="1" type="primary">iraP</name>
    <name type="ordered locus">ECSE_0403</name>
</gene>
<name>IRAP_ECOSE</name>
<proteinExistence type="inferred from homology"/>
<dbReference type="EMBL" id="AP009240">
    <property type="protein sequence ID" value="BAG75927.1"/>
    <property type="molecule type" value="Genomic_DNA"/>
</dbReference>
<dbReference type="RefSeq" id="WP_000792976.1">
    <property type="nucleotide sequence ID" value="NC_011415.1"/>
</dbReference>
<dbReference type="SMR" id="B6HZI2"/>
<dbReference type="KEGG" id="ecy:ECSE_0403"/>
<dbReference type="HOGENOM" id="CLU_169517_0_0_6"/>
<dbReference type="Proteomes" id="UP000008199">
    <property type="component" value="Chromosome"/>
</dbReference>
<dbReference type="GO" id="GO:0005737">
    <property type="term" value="C:cytoplasm"/>
    <property type="evidence" value="ECO:0007669"/>
    <property type="project" value="UniProtKB-SubCell"/>
</dbReference>
<dbReference type="GO" id="GO:0009267">
    <property type="term" value="P:cellular response to starvation"/>
    <property type="evidence" value="ECO:0007669"/>
    <property type="project" value="UniProtKB-UniRule"/>
</dbReference>
<dbReference type="HAMAP" id="MF_01198">
    <property type="entry name" value="Anti_adapt_IraP"/>
    <property type="match status" value="1"/>
</dbReference>
<dbReference type="InterPro" id="IPR019732">
    <property type="entry name" value="SigmaS_Anti-adapt_IraP"/>
</dbReference>
<dbReference type="NCBIfam" id="NF007598">
    <property type="entry name" value="PRK10244.1"/>
    <property type="match status" value="1"/>
</dbReference>
<dbReference type="Pfam" id="PF10796">
    <property type="entry name" value="Anti-adapt_IraP"/>
    <property type="match status" value="1"/>
</dbReference>
<comment type="function">
    <text evidence="1">Inhibits RpoS proteolysis by regulating RssB activity, thereby increasing the stability of the sigma stress factor RpoS especially during phosphate starvation, but also in stationary phase and during nitrogen starvation. Its effect on RpoS stability is due to its interaction with RssB, which probably blocks the interaction of RssB with RpoS, and the consequent delivery of the RssB-RpoS complex to the ClpXP protein degradation pathway.</text>
</comment>
<comment type="subunit">
    <text evidence="1">Interacts with RssB.</text>
</comment>
<comment type="subcellular location">
    <subcellularLocation>
        <location evidence="1">Cytoplasm</location>
    </subcellularLocation>
</comment>
<comment type="similarity">
    <text evidence="1">Belongs to the IraP family.</text>
</comment>
<organism>
    <name type="scientific">Escherichia coli (strain SE11)</name>
    <dbReference type="NCBI Taxonomy" id="409438"/>
    <lineage>
        <taxon>Bacteria</taxon>
        <taxon>Pseudomonadati</taxon>
        <taxon>Pseudomonadota</taxon>
        <taxon>Gammaproteobacteria</taxon>
        <taxon>Enterobacterales</taxon>
        <taxon>Enterobacteriaceae</taxon>
        <taxon>Escherichia</taxon>
    </lineage>
</organism>
<reference key="1">
    <citation type="journal article" date="2008" name="DNA Res.">
        <title>Complete genome sequence and comparative analysis of the wild-type commensal Escherichia coli strain SE11 isolated from a healthy adult.</title>
        <authorList>
            <person name="Oshima K."/>
            <person name="Toh H."/>
            <person name="Ogura Y."/>
            <person name="Sasamoto H."/>
            <person name="Morita H."/>
            <person name="Park S.-H."/>
            <person name="Ooka T."/>
            <person name="Iyoda S."/>
            <person name="Taylor T.D."/>
            <person name="Hayashi T."/>
            <person name="Itoh K."/>
            <person name="Hattori M."/>
        </authorList>
    </citation>
    <scope>NUCLEOTIDE SEQUENCE [LARGE SCALE GENOMIC DNA]</scope>
    <source>
        <strain>SE11</strain>
    </source>
</reference>